<feature type="chain" id="PRO_0000091026" description="Elongation factor 2">
    <location>
        <begin position="1"/>
        <end position="728"/>
    </location>
</feature>
<feature type="domain" description="tr-type G">
    <location>
        <begin position="18"/>
        <end position="258"/>
    </location>
</feature>
<feature type="binding site" evidence="1">
    <location>
        <begin position="27"/>
        <end position="34"/>
    </location>
    <ligand>
        <name>GTP</name>
        <dbReference type="ChEBI" id="CHEBI:37565"/>
    </ligand>
</feature>
<feature type="binding site" evidence="1">
    <location>
        <begin position="93"/>
        <end position="97"/>
    </location>
    <ligand>
        <name>GTP</name>
        <dbReference type="ChEBI" id="CHEBI:37565"/>
    </ligand>
</feature>
<feature type="binding site" evidence="1">
    <location>
        <begin position="147"/>
        <end position="150"/>
    </location>
    <ligand>
        <name>GTP</name>
        <dbReference type="ChEBI" id="CHEBI:37565"/>
    </ligand>
</feature>
<feature type="modified residue" description="Diphthamide" evidence="1">
    <location>
        <position position="594"/>
    </location>
</feature>
<sequence length="728" mass="81136">MARAKKVDKIKELMWKPKFIRNIGIVAHIDHGKTTLSDNLLAGAGMISEELAGQQLYLDFDEQEQERGITINAANVSMVHEYEGQDYLINLIDTPGHVDFGGDVTRAMRAVDGVIVVVDAVEGVMPQTETVLRQALKENVKPVLFVNKVDRLIKELELTPQQMQERLIKVITEVNKLIKAMRPDKYSEWKIDVANGSAAFGSALYNWAVSVPSQKKTGIGFKEVYEHIKEGKVKELAKKSPLYQVVLDMVIRHLPSPIEAQKERIAVIWKGDINSEVGKAMVNCDPKGPVALMITKIVVEPQAGEIAVGRLYSGTIRPGMELYIVDRKAKNRIQTVGLYMGPRRVEVDEIPAGNIVAVIGLKDAVAGSTCTTVENLTPFESIKHYSEPVVTMAIEAKNPRDLPKLIEVLRKLAKEDPTLHITLNEETGEHLISGMGELHLEVKVEKIRRDYKLDVITSPPIVVFRETVTGTSPVVEGKSPNKHNRFYIVVEPLPEKVIQMFKEGVVDMKMDKKERRRLLQEAGLTSEEAAGAEEYYEGNLFCDVTKGIQYLNETMELILEGFREAMRAGPIAREPCMGIKVKLVDCKLHEDAVHRGPAQVIPAVRSAIFAAILQAKPALLEPYQKIFITVPQDMMGAVTREIQGRRGQILEMKTEGDMVTIIAKAPVKEMFGFAGAIRGATSGKAIWSTEHAGFELVPQNLFQEFVMEVRKRKGLKLEMPKPEDFVGL</sequence>
<organism>
    <name type="scientific">Archaeoglobus fulgidus (strain ATCC 49558 / DSM 4304 / JCM 9628 / NBRC 100126 / VC-16)</name>
    <dbReference type="NCBI Taxonomy" id="224325"/>
    <lineage>
        <taxon>Archaea</taxon>
        <taxon>Methanobacteriati</taxon>
        <taxon>Methanobacteriota</taxon>
        <taxon>Archaeoglobi</taxon>
        <taxon>Archaeoglobales</taxon>
        <taxon>Archaeoglobaceae</taxon>
        <taxon>Archaeoglobus</taxon>
    </lineage>
</organism>
<proteinExistence type="inferred from homology"/>
<comment type="function">
    <text evidence="1">Catalyzes the GTP-dependent ribosomal translocation step during translation elongation. During this step, the ribosome changes from the pre-translocational (PRE) to the post-translocational (POST) state as the newly formed A-site-bound peptidyl-tRNA and P-site-bound deacylated tRNA move to the P and E sites, respectively. Catalyzes the coordinated movement of the two tRNA molecules, the mRNA and conformational changes in the ribosome (By similarity).</text>
</comment>
<comment type="subcellular location">
    <subcellularLocation>
        <location evidence="1">Cytoplasm</location>
    </subcellularLocation>
</comment>
<comment type="similarity">
    <text evidence="2">Belongs to the TRAFAC class translation factor GTPase superfamily. Classic translation factor GTPase family. EF-G/EF-2 subfamily.</text>
</comment>
<dbReference type="EMBL" id="AE000782">
    <property type="protein sequence ID" value="AAB89360.1"/>
    <property type="molecule type" value="Genomic_DNA"/>
</dbReference>
<dbReference type="PIR" id="E69486">
    <property type="entry name" value="E69486"/>
</dbReference>
<dbReference type="RefSeq" id="WP_010879387.1">
    <property type="nucleotide sequence ID" value="NC_000917.1"/>
</dbReference>
<dbReference type="SMR" id="O28385"/>
<dbReference type="STRING" id="224325.AF_1894"/>
<dbReference type="PaxDb" id="224325-AF_1894"/>
<dbReference type="EnsemblBacteria" id="AAB89360">
    <property type="protein sequence ID" value="AAB89360"/>
    <property type="gene ID" value="AF_1894"/>
</dbReference>
<dbReference type="KEGG" id="afu:AF_1894"/>
<dbReference type="eggNOG" id="arCOG01559">
    <property type="taxonomic scope" value="Archaea"/>
</dbReference>
<dbReference type="HOGENOM" id="CLU_002794_11_1_2"/>
<dbReference type="OrthoDB" id="6290at2157"/>
<dbReference type="PhylomeDB" id="O28385"/>
<dbReference type="Proteomes" id="UP000002199">
    <property type="component" value="Chromosome"/>
</dbReference>
<dbReference type="GO" id="GO:0005829">
    <property type="term" value="C:cytosol"/>
    <property type="evidence" value="ECO:0007669"/>
    <property type="project" value="TreeGrafter"/>
</dbReference>
<dbReference type="GO" id="GO:1990904">
    <property type="term" value="C:ribonucleoprotein complex"/>
    <property type="evidence" value="ECO:0007669"/>
    <property type="project" value="TreeGrafter"/>
</dbReference>
<dbReference type="GO" id="GO:0005525">
    <property type="term" value="F:GTP binding"/>
    <property type="evidence" value="ECO:0007669"/>
    <property type="project" value="UniProtKB-UniRule"/>
</dbReference>
<dbReference type="GO" id="GO:0003924">
    <property type="term" value="F:GTPase activity"/>
    <property type="evidence" value="ECO:0007669"/>
    <property type="project" value="InterPro"/>
</dbReference>
<dbReference type="GO" id="GO:0003746">
    <property type="term" value="F:translation elongation factor activity"/>
    <property type="evidence" value="ECO:0007669"/>
    <property type="project" value="UniProtKB-UniRule"/>
</dbReference>
<dbReference type="CDD" id="cd01681">
    <property type="entry name" value="aeEF2_snRNP_like_IV"/>
    <property type="match status" value="1"/>
</dbReference>
<dbReference type="CDD" id="cd01885">
    <property type="entry name" value="EF2"/>
    <property type="match status" value="1"/>
</dbReference>
<dbReference type="CDD" id="cd16268">
    <property type="entry name" value="EF2_II"/>
    <property type="match status" value="1"/>
</dbReference>
<dbReference type="CDD" id="cd16261">
    <property type="entry name" value="EF2_snRNP_III"/>
    <property type="match status" value="1"/>
</dbReference>
<dbReference type="CDD" id="cd01514">
    <property type="entry name" value="Elongation_Factor_C"/>
    <property type="match status" value="1"/>
</dbReference>
<dbReference type="FunFam" id="3.30.70.240:FF:000010">
    <property type="entry name" value="Elongation factor 2"/>
    <property type="match status" value="1"/>
</dbReference>
<dbReference type="FunFam" id="3.40.50.300:FF:000684">
    <property type="entry name" value="Elongation factor 2"/>
    <property type="match status" value="1"/>
</dbReference>
<dbReference type="FunFam" id="3.30.70.870:FF:000002">
    <property type="entry name" value="Translation elongation factor 2"/>
    <property type="match status" value="1"/>
</dbReference>
<dbReference type="Gene3D" id="3.30.230.10">
    <property type="match status" value="1"/>
</dbReference>
<dbReference type="Gene3D" id="3.30.70.240">
    <property type="match status" value="1"/>
</dbReference>
<dbReference type="Gene3D" id="3.30.70.870">
    <property type="entry name" value="Elongation Factor G (Translational Gtpase), domain 3"/>
    <property type="match status" value="1"/>
</dbReference>
<dbReference type="Gene3D" id="3.40.50.300">
    <property type="entry name" value="P-loop containing nucleotide triphosphate hydrolases"/>
    <property type="match status" value="1"/>
</dbReference>
<dbReference type="Gene3D" id="2.40.30.10">
    <property type="entry name" value="Translation factors"/>
    <property type="match status" value="1"/>
</dbReference>
<dbReference type="HAMAP" id="MF_00054_A">
    <property type="entry name" value="EF_G_EF_2_A"/>
    <property type="match status" value="1"/>
</dbReference>
<dbReference type="InterPro" id="IPR041095">
    <property type="entry name" value="EFG_II"/>
</dbReference>
<dbReference type="InterPro" id="IPR035647">
    <property type="entry name" value="EFG_III/V"/>
</dbReference>
<dbReference type="InterPro" id="IPR000640">
    <property type="entry name" value="EFG_V-like"/>
</dbReference>
<dbReference type="InterPro" id="IPR004161">
    <property type="entry name" value="EFTu-like_2"/>
</dbReference>
<dbReference type="InterPro" id="IPR031157">
    <property type="entry name" value="G_TR_CS"/>
</dbReference>
<dbReference type="InterPro" id="IPR027417">
    <property type="entry name" value="P-loop_NTPase"/>
</dbReference>
<dbReference type="InterPro" id="IPR020568">
    <property type="entry name" value="Ribosomal_Su5_D2-typ_SF"/>
</dbReference>
<dbReference type="InterPro" id="IPR014721">
    <property type="entry name" value="Ribsml_uS5_D2-typ_fold_subgr"/>
</dbReference>
<dbReference type="InterPro" id="IPR005225">
    <property type="entry name" value="Small_GTP-bd"/>
</dbReference>
<dbReference type="InterPro" id="IPR000795">
    <property type="entry name" value="T_Tr_GTP-bd_dom"/>
</dbReference>
<dbReference type="InterPro" id="IPR009000">
    <property type="entry name" value="Transl_B-barrel_sf"/>
</dbReference>
<dbReference type="InterPro" id="IPR004543">
    <property type="entry name" value="Transl_elong_EFG/EF2_arc"/>
</dbReference>
<dbReference type="InterPro" id="IPR005517">
    <property type="entry name" value="Transl_elong_EFG/EF2_IV"/>
</dbReference>
<dbReference type="NCBIfam" id="TIGR00490">
    <property type="entry name" value="aEF-2"/>
    <property type="match status" value="1"/>
</dbReference>
<dbReference type="NCBIfam" id="TIGR00231">
    <property type="entry name" value="small_GTP"/>
    <property type="match status" value="1"/>
</dbReference>
<dbReference type="PANTHER" id="PTHR42908:SF3">
    <property type="entry name" value="ELONGATION FACTOR-LIKE GTPASE 1"/>
    <property type="match status" value="1"/>
</dbReference>
<dbReference type="PANTHER" id="PTHR42908">
    <property type="entry name" value="TRANSLATION ELONGATION FACTOR-RELATED"/>
    <property type="match status" value="1"/>
</dbReference>
<dbReference type="Pfam" id="PF00679">
    <property type="entry name" value="EFG_C"/>
    <property type="match status" value="1"/>
</dbReference>
<dbReference type="Pfam" id="PF14492">
    <property type="entry name" value="EFG_III"/>
    <property type="match status" value="1"/>
</dbReference>
<dbReference type="Pfam" id="PF03764">
    <property type="entry name" value="EFG_IV"/>
    <property type="match status" value="1"/>
</dbReference>
<dbReference type="Pfam" id="PF00009">
    <property type="entry name" value="GTP_EFTU"/>
    <property type="match status" value="1"/>
</dbReference>
<dbReference type="Pfam" id="PF03144">
    <property type="entry name" value="GTP_EFTU_D2"/>
    <property type="match status" value="1"/>
</dbReference>
<dbReference type="PRINTS" id="PR00315">
    <property type="entry name" value="ELONGATNFCT"/>
</dbReference>
<dbReference type="SMART" id="SM00838">
    <property type="entry name" value="EFG_C"/>
    <property type="match status" value="1"/>
</dbReference>
<dbReference type="SMART" id="SM00889">
    <property type="entry name" value="EFG_IV"/>
    <property type="match status" value="1"/>
</dbReference>
<dbReference type="SUPFAM" id="SSF54980">
    <property type="entry name" value="EF-G C-terminal domain-like"/>
    <property type="match status" value="2"/>
</dbReference>
<dbReference type="SUPFAM" id="SSF52540">
    <property type="entry name" value="P-loop containing nucleoside triphosphate hydrolases"/>
    <property type="match status" value="1"/>
</dbReference>
<dbReference type="SUPFAM" id="SSF54211">
    <property type="entry name" value="Ribosomal protein S5 domain 2-like"/>
    <property type="match status" value="1"/>
</dbReference>
<dbReference type="SUPFAM" id="SSF50447">
    <property type="entry name" value="Translation proteins"/>
    <property type="match status" value="1"/>
</dbReference>
<dbReference type="PROSITE" id="PS00301">
    <property type="entry name" value="G_TR_1"/>
    <property type="match status" value="1"/>
</dbReference>
<dbReference type="PROSITE" id="PS51722">
    <property type="entry name" value="G_TR_2"/>
    <property type="match status" value="1"/>
</dbReference>
<accession>O28385</accession>
<name>EF2_ARCFU</name>
<reference key="1">
    <citation type="journal article" date="1997" name="Nature">
        <title>The complete genome sequence of the hyperthermophilic, sulphate-reducing archaeon Archaeoglobus fulgidus.</title>
        <authorList>
            <person name="Klenk H.-P."/>
            <person name="Clayton R.A."/>
            <person name="Tomb J.-F."/>
            <person name="White O."/>
            <person name="Nelson K.E."/>
            <person name="Ketchum K.A."/>
            <person name="Dodson R.J."/>
            <person name="Gwinn M.L."/>
            <person name="Hickey E.K."/>
            <person name="Peterson J.D."/>
            <person name="Richardson D.L."/>
            <person name="Kerlavage A.R."/>
            <person name="Graham D.E."/>
            <person name="Kyrpides N.C."/>
            <person name="Fleischmann R.D."/>
            <person name="Quackenbush J."/>
            <person name="Lee N.H."/>
            <person name="Sutton G.G."/>
            <person name="Gill S.R."/>
            <person name="Kirkness E.F."/>
            <person name="Dougherty B.A."/>
            <person name="McKenney K."/>
            <person name="Adams M.D."/>
            <person name="Loftus B.J."/>
            <person name="Peterson S.N."/>
            <person name="Reich C.I."/>
            <person name="McNeil L.K."/>
            <person name="Badger J.H."/>
            <person name="Glodek A."/>
            <person name="Zhou L."/>
            <person name="Overbeek R."/>
            <person name="Gocayne J.D."/>
            <person name="Weidman J.F."/>
            <person name="McDonald L.A."/>
            <person name="Utterback T.R."/>
            <person name="Cotton M.D."/>
            <person name="Spriggs T."/>
            <person name="Artiach P."/>
            <person name="Kaine B.P."/>
            <person name="Sykes S.M."/>
            <person name="Sadow P.W."/>
            <person name="D'Andrea K.P."/>
            <person name="Bowman C."/>
            <person name="Fujii C."/>
            <person name="Garland S.A."/>
            <person name="Mason T.M."/>
            <person name="Olsen G.J."/>
            <person name="Fraser C.M."/>
            <person name="Smith H.O."/>
            <person name="Woese C.R."/>
            <person name="Venter J.C."/>
        </authorList>
    </citation>
    <scope>NUCLEOTIDE SEQUENCE [LARGE SCALE GENOMIC DNA]</scope>
    <source>
        <strain>ATCC 49558 / DSM 4304 / JCM 9628 / NBRC 100126 / VC-16</strain>
    </source>
</reference>
<evidence type="ECO:0000250" key="1"/>
<evidence type="ECO:0000305" key="2"/>
<gene>
    <name type="primary">fusA</name>
    <name type="synonym">fus</name>
    <name type="ordered locus">AF_1894</name>
</gene>
<keyword id="KW-0963">Cytoplasm</keyword>
<keyword id="KW-0251">Elongation factor</keyword>
<keyword id="KW-0342">GTP-binding</keyword>
<keyword id="KW-0547">Nucleotide-binding</keyword>
<keyword id="KW-0648">Protein biosynthesis</keyword>
<keyword id="KW-1185">Reference proteome</keyword>
<protein>
    <recommendedName>
        <fullName>Elongation factor 2</fullName>
        <shortName>EF-2</shortName>
    </recommendedName>
</protein>